<keyword id="KW-0285">Flavoprotein</keyword>
<keyword id="KW-0288">FMN</keyword>
<keyword id="KW-0503">Monooxygenase</keyword>
<keyword id="KW-0521">NADP</keyword>
<keyword id="KW-0560">Oxidoreductase</keyword>
<feature type="chain" id="PRO_0000402642" description="Pyrimidine monooxygenase RutA">
    <location>
        <begin position="1"/>
        <end position="382"/>
    </location>
</feature>
<feature type="binding site" evidence="1">
    <location>
        <begin position="68"/>
        <end position="69"/>
    </location>
    <ligand>
        <name>FMN</name>
        <dbReference type="ChEBI" id="CHEBI:58210"/>
    </ligand>
</feature>
<feature type="binding site" evidence="1">
    <location>
        <position position="134"/>
    </location>
    <ligand>
        <name>FMN</name>
        <dbReference type="ChEBI" id="CHEBI:58210"/>
    </ligand>
</feature>
<feature type="binding site" evidence="1">
    <location>
        <position position="143"/>
    </location>
    <ligand>
        <name>FMN</name>
        <dbReference type="ChEBI" id="CHEBI:58210"/>
    </ligand>
</feature>
<feature type="binding site" evidence="1">
    <location>
        <begin position="159"/>
        <end position="160"/>
    </location>
    <ligand>
        <name>FMN</name>
        <dbReference type="ChEBI" id="CHEBI:58210"/>
    </ligand>
</feature>
<feature type="binding site" evidence="1">
    <location>
        <position position="209"/>
    </location>
    <ligand>
        <name>FMN</name>
        <dbReference type="ChEBI" id="CHEBI:58210"/>
    </ligand>
</feature>
<gene>
    <name evidence="1" type="primary">rutA</name>
    <name type="ordered locus">SFxv_1101</name>
</gene>
<sequence>MQDAAPRLTFTLRDEERLMMKIGVFVPIGNNGWLISTHAPQYMPTFELNKAIAQKAEHYHFDFALSMIKLRGFGGKTEFWDHNLESFTLMAGLAAVTSRIQIYATAATLTLPPAIVARMAATIDSISGGRFGVNLVTGWQKPEYEQMGIWPGDDYFSRRYDYLTEYVQVLRDLWGTGKSDFKGDFFTMNDCRVSPQPSIPMKVICAGQSDAGMAFSAQYADFNFCFGKGVNTPTAFAPTAARMKQATEQTGRDVGSYVLFMVIADETDDATRAKWEHYKAGADEEALSWLTEQSQKDTRSGTDTNVRQMADPTSAVNINMGTLVGSYASVARMLDEVASVPGAEGVLLTFDDFLSGIETFGERIQPLMQCRAHLSALTQEVA</sequence>
<protein>
    <recommendedName>
        <fullName evidence="1">Pyrimidine monooxygenase RutA</fullName>
        <ecNumber evidence="1">1.14.99.46</ecNumber>
    </recommendedName>
</protein>
<name>RUTA_SHIF2</name>
<reference key="1">
    <citation type="journal article" date="2010" name="J. Clin. Microbiol.">
        <title>Emergence of a new multidrug-resistant serotype X variant in an epidemic clone of Shigella flexneri.</title>
        <authorList>
            <person name="Ye C."/>
            <person name="Lan R."/>
            <person name="Xia S."/>
            <person name="Zhang J."/>
            <person name="Sun Q."/>
            <person name="Zhang S."/>
            <person name="Jing H."/>
            <person name="Wang L."/>
            <person name="Li Z."/>
            <person name="Zhou Z."/>
            <person name="Zhao A."/>
            <person name="Cui Z."/>
            <person name="Cao J."/>
            <person name="Jin D."/>
            <person name="Huang L."/>
            <person name="Wang Y."/>
            <person name="Luo X."/>
            <person name="Bai X."/>
            <person name="Wang Y."/>
            <person name="Wang P."/>
            <person name="Xu Q."/>
            <person name="Xu J."/>
        </authorList>
    </citation>
    <scope>NUCLEOTIDE SEQUENCE [LARGE SCALE GENOMIC DNA]</scope>
    <source>
        <strain>2002017</strain>
    </source>
</reference>
<accession>D2AC43</accession>
<evidence type="ECO:0000255" key="1">
    <source>
        <dbReference type="HAMAP-Rule" id="MF_01699"/>
    </source>
</evidence>
<proteinExistence type="inferred from homology"/>
<dbReference type="EC" id="1.14.99.46" evidence="1"/>
<dbReference type="EMBL" id="CP001383">
    <property type="protein sequence ID" value="ADA73361.1"/>
    <property type="molecule type" value="Genomic_DNA"/>
</dbReference>
<dbReference type="SMR" id="D2AC43"/>
<dbReference type="KEGG" id="sfe:SFxv_1101"/>
<dbReference type="PATRIC" id="fig|591020.3.peg.1175"/>
<dbReference type="HOGENOM" id="CLU_027853_1_1_6"/>
<dbReference type="GO" id="GO:0008726">
    <property type="term" value="F:alkanesulfonate monooxygenase activity"/>
    <property type="evidence" value="ECO:0007669"/>
    <property type="project" value="TreeGrafter"/>
</dbReference>
<dbReference type="GO" id="GO:0052614">
    <property type="term" value="F:uracil oxygenase activity"/>
    <property type="evidence" value="ECO:0007669"/>
    <property type="project" value="UniProtKB-EC"/>
</dbReference>
<dbReference type="GO" id="GO:0046306">
    <property type="term" value="P:alkanesulfonate catabolic process"/>
    <property type="evidence" value="ECO:0007669"/>
    <property type="project" value="TreeGrafter"/>
</dbReference>
<dbReference type="GO" id="GO:0019740">
    <property type="term" value="P:nitrogen utilization"/>
    <property type="evidence" value="ECO:0007669"/>
    <property type="project" value="UniProtKB-UniRule"/>
</dbReference>
<dbReference type="GO" id="GO:0006212">
    <property type="term" value="P:uracil catabolic process"/>
    <property type="evidence" value="ECO:0007669"/>
    <property type="project" value="UniProtKB-UniRule"/>
</dbReference>
<dbReference type="CDD" id="cd01094">
    <property type="entry name" value="Alkanesulfonate_monoxygenase"/>
    <property type="match status" value="1"/>
</dbReference>
<dbReference type="FunFam" id="3.20.20.30:FF:000003">
    <property type="entry name" value="Pyrimidine monooxygenase RutA"/>
    <property type="match status" value="1"/>
</dbReference>
<dbReference type="Gene3D" id="3.20.20.30">
    <property type="entry name" value="Luciferase-like domain"/>
    <property type="match status" value="1"/>
</dbReference>
<dbReference type="HAMAP" id="MF_01699">
    <property type="entry name" value="RutA"/>
    <property type="match status" value="1"/>
</dbReference>
<dbReference type="InterPro" id="IPR011251">
    <property type="entry name" value="Luciferase-like_dom"/>
</dbReference>
<dbReference type="InterPro" id="IPR036661">
    <property type="entry name" value="Luciferase-like_sf"/>
</dbReference>
<dbReference type="InterPro" id="IPR019914">
    <property type="entry name" value="Pyrimidine_monooxygenase_RutA"/>
</dbReference>
<dbReference type="InterPro" id="IPR050172">
    <property type="entry name" value="SsuD_RutA_monooxygenase"/>
</dbReference>
<dbReference type="NCBIfam" id="TIGR03612">
    <property type="entry name" value="RutA"/>
    <property type="match status" value="1"/>
</dbReference>
<dbReference type="PANTHER" id="PTHR42847">
    <property type="entry name" value="ALKANESULFONATE MONOOXYGENASE"/>
    <property type="match status" value="1"/>
</dbReference>
<dbReference type="PANTHER" id="PTHR42847:SF4">
    <property type="entry name" value="ALKANESULFONATE MONOOXYGENASE-RELATED"/>
    <property type="match status" value="1"/>
</dbReference>
<dbReference type="Pfam" id="PF00296">
    <property type="entry name" value="Bac_luciferase"/>
    <property type="match status" value="1"/>
</dbReference>
<dbReference type="SUPFAM" id="SSF51679">
    <property type="entry name" value="Bacterial luciferase-like"/>
    <property type="match status" value="1"/>
</dbReference>
<comment type="function">
    <text evidence="1">Catalyzes the pyrimidine ring opening between N-3 and C-4 by an unusual flavin hydroperoxide-catalyzed mechanism, adding oxygen atoms in the process to yield ureidoacrylate peracid, that immediately reacts with FMN forming ureidoacrylate and FMN-N(5)-oxide. The FMN-N(5)-oxide reacts spontaneously with NADH to produce FMN. Requires the flavin reductase RutF to regenerate FMN in vivo.</text>
</comment>
<comment type="catalytic activity">
    <reaction evidence="1">
        <text>uracil + FMNH2 + NADH + O2 = (Z)-3-ureidoacrylate + FMN + NAD(+) + H2O + H(+)</text>
        <dbReference type="Rhea" id="RHEA:31587"/>
        <dbReference type="ChEBI" id="CHEBI:15377"/>
        <dbReference type="ChEBI" id="CHEBI:15378"/>
        <dbReference type="ChEBI" id="CHEBI:15379"/>
        <dbReference type="ChEBI" id="CHEBI:17568"/>
        <dbReference type="ChEBI" id="CHEBI:57540"/>
        <dbReference type="ChEBI" id="CHEBI:57618"/>
        <dbReference type="ChEBI" id="CHEBI:57945"/>
        <dbReference type="ChEBI" id="CHEBI:58210"/>
        <dbReference type="ChEBI" id="CHEBI:59891"/>
        <dbReference type="EC" id="1.14.99.46"/>
    </reaction>
</comment>
<comment type="catalytic activity">
    <reaction evidence="1">
        <text>thymine + FMNH2 + NADH + O2 = (Z)-2-methylureidoacrylate + FMN + NAD(+) + H2O + H(+)</text>
        <dbReference type="Rhea" id="RHEA:31599"/>
        <dbReference type="ChEBI" id="CHEBI:15377"/>
        <dbReference type="ChEBI" id="CHEBI:15378"/>
        <dbReference type="ChEBI" id="CHEBI:15379"/>
        <dbReference type="ChEBI" id="CHEBI:17821"/>
        <dbReference type="ChEBI" id="CHEBI:57540"/>
        <dbReference type="ChEBI" id="CHEBI:57618"/>
        <dbReference type="ChEBI" id="CHEBI:57945"/>
        <dbReference type="ChEBI" id="CHEBI:58210"/>
        <dbReference type="ChEBI" id="CHEBI:143783"/>
        <dbReference type="EC" id="1.14.99.46"/>
    </reaction>
</comment>
<comment type="induction">
    <text evidence="1">Up-regulated by the nitrogen regulatory protein C (NtrC also called GlnG) and repressed by RutR.</text>
</comment>
<comment type="similarity">
    <text evidence="1">Belongs to the NtaA/SnaA/DszA monooxygenase family. RutA subfamily.</text>
</comment>
<organism>
    <name type="scientific">Shigella flexneri serotype X (strain 2002017)</name>
    <dbReference type="NCBI Taxonomy" id="591020"/>
    <lineage>
        <taxon>Bacteria</taxon>
        <taxon>Pseudomonadati</taxon>
        <taxon>Pseudomonadota</taxon>
        <taxon>Gammaproteobacteria</taxon>
        <taxon>Enterobacterales</taxon>
        <taxon>Enterobacteriaceae</taxon>
        <taxon>Shigella</taxon>
    </lineage>
</organism>